<sequence>MADLNAIVEQLSGLTIMEAAELVKQLEEKWGVSAAAAPVMMAGGPAAAAAPVEEKTEFTVVLADAGANKINVIKEVRAITGLGLKEAKDLVEGAPKEVKAGVAKAEAEELKKKLEAAGAKVEVK</sequence>
<proteinExistence type="inferred from homology"/>
<reference key="1">
    <citation type="submission" date="2006-01" db="EMBL/GenBank/DDBJ databases">
        <title>Complete sequence of Anaeromyxobacter dehalogenans 2CP-C.</title>
        <authorList>
            <person name="Copeland A."/>
            <person name="Lucas S."/>
            <person name="Lapidus A."/>
            <person name="Barry K."/>
            <person name="Detter J.C."/>
            <person name="Glavina T."/>
            <person name="Hammon N."/>
            <person name="Israni S."/>
            <person name="Pitluck S."/>
            <person name="Brettin T."/>
            <person name="Bruce D."/>
            <person name="Han C."/>
            <person name="Tapia R."/>
            <person name="Gilna P."/>
            <person name="Kiss H."/>
            <person name="Schmutz J."/>
            <person name="Larimer F."/>
            <person name="Land M."/>
            <person name="Kyrpides N."/>
            <person name="Anderson I."/>
            <person name="Sanford R.A."/>
            <person name="Ritalahti K.M."/>
            <person name="Thomas H.S."/>
            <person name="Kirby J.R."/>
            <person name="Zhulin I.B."/>
            <person name="Loeffler F.E."/>
            <person name="Richardson P."/>
        </authorList>
    </citation>
    <scope>NUCLEOTIDE SEQUENCE [LARGE SCALE GENOMIC DNA]</scope>
    <source>
        <strain>2CP-C</strain>
    </source>
</reference>
<name>RL7_ANADE</name>
<keyword id="KW-1185">Reference proteome</keyword>
<keyword id="KW-0687">Ribonucleoprotein</keyword>
<keyword id="KW-0689">Ribosomal protein</keyword>
<comment type="function">
    <text evidence="1">Forms part of the ribosomal stalk which helps the ribosome interact with GTP-bound translation factors. Is thus essential for accurate translation.</text>
</comment>
<comment type="subunit">
    <text evidence="1">Homodimer. Part of the ribosomal stalk of the 50S ribosomal subunit. Forms a multimeric L10(L12)X complex, where L10 forms an elongated spine to which 2 to 4 L12 dimers bind in a sequential fashion. Binds GTP-bound translation factors.</text>
</comment>
<comment type="similarity">
    <text evidence="1">Belongs to the bacterial ribosomal protein bL12 family.</text>
</comment>
<feature type="chain" id="PRO_0000243376" description="Large ribosomal subunit protein bL12">
    <location>
        <begin position="1"/>
        <end position="124"/>
    </location>
</feature>
<protein>
    <recommendedName>
        <fullName evidence="1">Large ribosomal subunit protein bL12</fullName>
    </recommendedName>
    <alternativeName>
        <fullName evidence="2">50S ribosomal protein L7/L12</fullName>
    </alternativeName>
</protein>
<gene>
    <name evidence="1" type="primary">rplL</name>
    <name type="ordered locus">Adeh_1591</name>
</gene>
<dbReference type="EMBL" id="CP000251">
    <property type="protein sequence ID" value="ABC81364.1"/>
    <property type="molecule type" value="Genomic_DNA"/>
</dbReference>
<dbReference type="RefSeq" id="WP_011420647.1">
    <property type="nucleotide sequence ID" value="NC_007760.1"/>
</dbReference>
<dbReference type="SMR" id="Q2II87"/>
<dbReference type="STRING" id="290397.Adeh_1591"/>
<dbReference type="KEGG" id="ade:Adeh_1591"/>
<dbReference type="eggNOG" id="COG0222">
    <property type="taxonomic scope" value="Bacteria"/>
</dbReference>
<dbReference type="HOGENOM" id="CLU_086499_3_0_7"/>
<dbReference type="OrthoDB" id="9811748at2"/>
<dbReference type="Proteomes" id="UP000001935">
    <property type="component" value="Chromosome"/>
</dbReference>
<dbReference type="GO" id="GO:0005737">
    <property type="term" value="C:cytoplasm"/>
    <property type="evidence" value="ECO:0007669"/>
    <property type="project" value="UniProtKB-ARBA"/>
</dbReference>
<dbReference type="GO" id="GO:1990904">
    <property type="term" value="C:ribonucleoprotein complex"/>
    <property type="evidence" value="ECO:0007669"/>
    <property type="project" value="UniProtKB-KW"/>
</dbReference>
<dbReference type="GO" id="GO:0005840">
    <property type="term" value="C:ribosome"/>
    <property type="evidence" value="ECO:0007669"/>
    <property type="project" value="UniProtKB-KW"/>
</dbReference>
<dbReference type="GO" id="GO:0003729">
    <property type="term" value="F:mRNA binding"/>
    <property type="evidence" value="ECO:0007669"/>
    <property type="project" value="TreeGrafter"/>
</dbReference>
<dbReference type="GO" id="GO:0003735">
    <property type="term" value="F:structural constituent of ribosome"/>
    <property type="evidence" value="ECO:0007669"/>
    <property type="project" value="InterPro"/>
</dbReference>
<dbReference type="GO" id="GO:0006412">
    <property type="term" value="P:translation"/>
    <property type="evidence" value="ECO:0007669"/>
    <property type="project" value="UniProtKB-UniRule"/>
</dbReference>
<dbReference type="CDD" id="cd00387">
    <property type="entry name" value="Ribosomal_L7_L12"/>
    <property type="match status" value="1"/>
</dbReference>
<dbReference type="FunFam" id="3.30.1390.10:FF:000001">
    <property type="entry name" value="50S ribosomal protein L7/L12"/>
    <property type="match status" value="1"/>
</dbReference>
<dbReference type="Gene3D" id="3.30.1390.10">
    <property type="match status" value="1"/>
</dbReference>
<dbReference type="Gene3D" id="1.20.5.710">
    <property type="entry name" value="Single helix bin"/>
    <property type="match status" value="1"/>
</dbReference>
<dbReference type="HAMAP" id="MF_00368">
    <property type="entry name" value="Ribosomal_bL12"/>
    <property type="match status" value="1"/>
</dbReference>
<dbReference type="InterPro" id="IPR000206">
    <property type="entry name" value="Ribosomal_bL12"/>
</dbReference>
<dbReference type="InterPro" id="IPR013823">
    <property type="entry name" value="Ribosomal_bL12_C"/>
</dbReference>
<dbReference type="InterPro" id="IPR014719">
    <property type="entry name" value="Ribosomal_bL12_C/ClpS-like"/>
</dbReference>
<dbReference type="InterPro" id="IPR008932">
    <property type="entry name" value="Ribosomal_bL12_oligo"/>
</dbReference>
<dbReference type="InterPro" id="IPR036235">
    <property type="entry name" value="Ribosomal_bL12_oligo_N_sf"/>
</dbReference>
<dbReference type="NCBIfam" id="TIGR00855">
    <property type="entry name" value="L12"/>
    <property type="match status" value="1"/>
</dbReference>
<dbReference type="PANTHER" id="PTHR45987">
    <property type="entry name" value="39S RIBOSOMAL PROTEIN L12"/>
    <property type="match status" value="1"/>
</dbReference>
<dbReference type="PANTHER" id="PTHR45987:SF4">
    <property type="entry name" value="LARGE RIBOSOMAL SUBUNIT PROTEIN BL12M"/>
    <property type="match status" value="1"/>
</dbReference>
<dbReference type="Pfam" id="PF00542">
    <property type="entry name" value="Ribosomal_L12"/>
    <property type="match status" value="1"/>
</dbReference>
<dbReference type="Pfam" id="PF16320">
    <property type="entry name" value="Ribosomal_L12_N"/>
    <property type="match status" value="1"/>
</dbReference>
<dbReference type="SUPFAM" id="SSF54736">
    <property type="entry name" value="ClpS-like"/>
    <property type="match status" value="1"/>
</dbReference>
<dbReference type="SUPFAM" id="SSF48300">
    <property type="entry name" value="Ribosomal protein L7/12, oligomerisation (N-terminal) domain"/>
    <property type="match status" value="1"/>
</dbReference>
<accession>Q2II87</accession>
<evidence type="ECO:0000255" key="1">
    <source>
        <dbReference type="HAMAP-Rule" id="MF_00368"/>
    </source>
</evidence>
<evidence type="ECO:0000305" key="2"/>
<organism>
    <name type="scientific">Anaeromyxobacter dehalogenans (strain 2CP-C)</name>
    <dbReference type="NCBI Taxonomy" id="290397"/>
    <lineage>
        <taxon>Bacteria</taxon>
        <taxon>Pseudomonadati</taxon>
        <taxon>Myxococcota</taxon>
        <taxon>Myxococcia</taxon>
        <taxon>Myxococcales</taxon>
        <taxon>Cystobacterineae</taxon>
        <taxon>Anaeromyxobacteraceae</taxon>
        <taxon>Anaeromyxobacter</taxon>
    </lineage>
</organism>